<comment type="catalytic activity">
    <reaction>
        <text>L-seryl-[protein] + ATP = O-phospho-L-seryl-[protein] + ADP + H(+)</text>
        <dbReference type="Rhea" id="RHEA:17989"/>
        <dbReference type="Rhea" id="RHEA-COMP:9863"/>
        <dbReference type="Rhea" id="RHEA-COMP:11604"/>
        <dbReference type="ChEBI" id="CHEBI:15378"/>
        <dbReference type="ChEBI" id="CHEBI:29999"/>
        <dbReference type="ChEBI" id="CHEBI:30616"/>
        <dbReference type="ChEBI" id="CHEBI:83421"/>
        <dbReference type="ChEBI" id="CHEBI:456216"/>
        <dbReference type="EC" id="2.7.11.1"/>
    </reaction>
</comment>
<comment type="catalytic activity">
    <reaction>
        <text>L-threonyl-[protein] + ATP = O-phospho-L-threonyl-[protein] + ADP + H(+)</text>
        <dbReference type="Rhea" id="RHEA:46608"/>
        <dbReference type="Rhea" id="RHEA-COMP:11060"/>
        <dbReference type="Rhea" id="RHEA-COMP:11605"/>
        <dbReference type="ChEBI" id="CHEBI:15378"/>
        <dbReference type="ChEBI" id="CHEBI:30013"/>
        <dbReference type="ChEBI" id="CHEBI:30616"/>
        <dbReference type="ChEBI" id="CHEBI:61977"/>
        <dbReference type="ChEBI" id="CHEBI:456216"/>
        <dbReference type="EC" id="2.7.11.1"/>
    </reaction>
</comment>
<comment type="similarity">
    <text evidence="1">Belongs to the protein kinase superfamily. Ser/Thr protein kinase family.</text>
</comment>
<name>YOO3_CAEEL</name>
<gene>
    <name type="ORF">ZK507.3</name>
</gene>
<dbReference type="EC" id="2.7.11.1"/>
<dbReference type="EMBL" id="Z29116">
    <property type="protein sequence ID" value="CAA82368.3"/>
    <property type="molecule type" value="Genomic_DNA"/>
</dbReference>
<dbReference type="PIR" id="S40737">
    <property type="entry name" value="S40737"/>
</dbReference>
<dbReference type="RefSeq" id="NP_499016.2">
    <property type="nucleotide sequence ID" value="NM_066615.2"/>
</dbReference>
<dbReference type="SMR" id="P34635"/>
<dbReference type="FunCoup" id="P34635">
    <property type="interactions" value="294"/>
</dbReference>
<dbReference type="STRING" id="6239.ZK507.3.1"/>
<dbReference type="PaxDb" id="6239-ZK507.3"/>
<dbReference type="UCSC" id="ZK507.3">
    <property type="organism name" value="c. elegans"/>
</dbReference>
<dbReference type="WormBase" id="ZK507.3">
    <property type="protein sequence ID" value="CE34146"/>
    <property type="gene ID" value="WBGene00013979"/>
</dbReference>
<dbReference type="eggNOG" id="KOG1164">
    <property type="taxonomic scope" value="Eukaryota"/>
</dbReference>
<dbReference type="HOGENOM" id="CLU_019279_2_5_1"/>
<dbReference type="InParanoid" id="P34635"/>
<dbReference type="OMA" id="DYESWYF"/>
<dbReference type="PhylomeDB" id="P34635"/>
<dbReference type="PRO" id="PR:P34635"/>
<dbReference type="Proteomes" id="UP000001940">
    <property type="component" value="Chromosome III"/>
</dbReference>
<dbReference type="Bgee" id="WBGene00013979">
    <property type="expression patterns" value="Expressed in adult organism and 2 other cell types or tissues"/>
</dbReference>
<dbReference type="GO" id="GO:0005737">
    <property type="term" value="C:cytoplasm"/>
    <property type="evidence" value="ECO:0000318"/>
    <property type="project" value="GO_Central"/>
</dbReference>
<dbReference type="GO" id="GO:0005634">
    <property type="term" value="C:nucleus"/>
    <property type="evidence" value="ECO:0000318"/>
    <property type="project" value="GO_Central"/>
</dbReference>
<dbReference type="GO" id="GO:0005524">
    <property type="term" value="F:ATP binding"/>
    <property type="evidence" value="ECO:0007669"/>
    <property type="project" value="UniProtKB-KW"/>
</dbReference>
<dbReference type="GO" id="GO:0106310">
    <property type="term" value="F:protein serine kinase activity"/>
    <property type="evidence" value="ECO:0007669"/>
    <property type="project" value="RHEA"/>
</dbReference>
<dbReference type="GO" id="GO:0004674">
    <property type="term" value="F:protein serine/threonine kinase activity"/>
    <property type="evidence" value="ECO:0000318"/>
    <property type="project" value="GO_Central"/>
</dbReference>
<dbReference type="GO" id="GO:0007165">
    <property type="term" value="P:signal transduction"/>
    <property type="evidence" value="ECO:0000318"/>
    <property type="project" value="GO_Central"/>
</dbReference>
<dbReference type="CDD" id="cd14017">
    <property type="entry name" value="STKc_TTBK"/>
    <property type="match status" value="1"/>
</dbReference>
<dbReference type="FunFam" id="1.10.510.10:FF:001793">
    <property type="entry name" value="Putative serine/threonine-protein kinase ZK507.1"/>
    <property type="match status" value="1"/>
</dbReference>
<dbReference type="Gene3D" id="1.10.510.10">
    <property type="entry name" value="Transferase(Phosphotransferase) domain 1"/>
    <property type="match status" value="1"/>
</dbReference>
<dbReference type="InterPro" id="IPR050235">
    <property type="entry name" value="CK1_Ser-Thr_kinase"/>
</dbReference>
<dbReference type="InterPro" id="IPR011009">
    <property type="entry name" value="Kinase-like_dom_sf"/>
</dbReference>
<dbReference type="InterPro" id="IPR000719">
    <property type="entry name" value="Prot_kinase_dom"/>
</dbReference>
<dbReference type="InterPro" id="IPR017441">
    <property type="entry name" value="Protein_kinase_ATP_BS"/>
</dbReference>
<dbReference type="InterPro" id="IPR008271">
    <property type="entry name" value="Ser/Thr_kinase_AS"/>
</dbReference>
<dbReference type="InterPro" id="IPR047916">
    <property type="entry name" value="TTBK_Asator-like_STKc"/>
</dbReference>
<dbReference type="PANTHER" id="PTHR11909">
    <property type="entry name" value="CASEIN KINASE-RELATED"/>
    <property type="match status" value="1"/>
</dbReference>
<dbReference type="Pfam" id="PF00069">
    <property type="entry name" value="Pkinase"/>
    <property type="match status" value="1"/>
</dbReference>
<dbReference type="SMART" id="SM00220">
    <property type="entry name" value="S_TKc"/>
    <property type="match status" value="1"/>
</dbReference>
<dbReference type="SUPFAM" id="SSF56112">
    <property type="entry name" value="Protein kinase-like (PK-like)"/>
    <property type="match status" value="1"/>
</dbReference>
<dbReference type="PROSITE" id="PS00107">
    <property type="entry name" value="PROTEIN_KINASE_ATP"/>
    <property type="match status" value="1"/>
</dbReference>
<dbReference type="PROSITE" id="PS50011">
    <property type="entry name" value="PROTEIN_KINASE_DOM"/>
    <property type="match status" value="1"/>
</dbReference>
<dbReference type="PROSITE" id="PS00108">
    <property type="entry name" value="PROTEIN_KINASE_ST"/>
    <property type="match status" value="1"/>
</dbReference>
<sequence length="374" mass="42680">MSNSQKPPSLQPNEIIKRTKPDYNWKVIVELGKGGYGTVNKVIKVNEEGFAIDDKEYAMKTEQKFASKHSSRLKIERNVMASYSKCDAQCKEHFPELIDFGQSPVWKWIVMTIVGPSLEELKMKYKPSDIPPSTILQCGLQTMKAIHDFHQIGFLHRDIKPANYCIGYGSKSETIYVLDFGLARKYRLPEWYCSRASHRCEELGRRDDYESWFFMFIDLVDTTLIDWKGLTRPDAYAKKQELFTKLKTYEKEPMFKVISIYLDTLVYDSDVKFGFLRDAITDYARSCKLTLKEPLVWFKERNDNESGSTPTTSATACSPSSSTGTGTGTGVSKIASNIDQKSIASDRNEENSLDGSKTGTWKSTKTRNKKPSRK</sequence>
<reference key="1">
    <citation type="journal article" date="1994" name="Nature">
        <title>2.2 Mb of contiguous nucleotide sequence from chromosome III of C. elegans.</title>
        <authorList>
            <person name="Wilson R."/>
            <person name="Ainscough R."/>
            <person name="Anderson K."/>
            <person name="Baynes C."/>
            <person name="Berks M."/>
            <person name="Bonfield J."/>
            <person name="Burton J."/>
            <person name="Connell M."/>
            <person name="Copsey T."/>
            <person name="Cooper J."/>
            <person name="Coulson A."/>
            <person name="Craxton M."/>
            <person name="Dear S."/>
            <person name="Du Z."/>
            <person name="Durbin R."/>
            <person name="Favello A."/>
            <person name="Fraser A."/>
            <person name="Fulton L."/>
            <person name="Gardner A."/>
            <person name="Green P."/>
            <person name="Hawkins T."/>
            <person name="Hillier L."/>
            <person name="Jier M."/>
            <person name="Johnston L."/>
            <person name="Jones M."/>
            <person name="Kershaw J."/>
            <person name="Kirsten J."/>
            <person name="Laisster N."/>
            <person name="Latreille P."/>
            <person name="Lightning J."/>
            <person name="Lloyd C."/>
            <person name="Mortimore B."/>
            <person name="O'Callaghan M."/>
            <person name="Parsons J."/>
            <person name="Percy C."/>
            <person name="Rifken L."/>
            <person name="Roopra A."/>
            <person name="Saunders D."/>
            <person name="Shownkeen R."/>
            <person name="Sims M."/>
            <person name="Smaldon N."/>
            <person name="Smith A."/>
            <person name="Smith M."/>
            <person name="Sonnhammer E."/>
            <person name="Staden R."/>
            <person name="Sulston J."/>
            <person name="Thierry-Mieg J."/>
            <person name="Thomas K."/>
            <person name="Vaudin M."/>
            <person name="Vaughan K."/>
            <person name="Waterston R."/>
            <person name="Watson A."/>
            <person name="Weinstock L."/>
            <person name="Wilkinson-Sproat J."/>
            <person name="Wohldman P."/>
        </authorList>
    </citation>
    <scope>NUCLEOTIDE SEQUENCE [LARGE SCALE GENOMIC DNA]</scope>
    <source>
        <strain>Bristol N2</strain>
    </source>
</reference>
<reference key="2">
    <citation type="journal article" date="1998" name="Science">
        <title>Genome sequence of the nematode C. elegans: a platform for investigating biology.</title>
        <authorList>
            <consortium name="The C. elegans sequencing consortium"/>
        </authorList>
    </citation>
    <scope>NUCLEOTIDE SEQUENCE [LARGE SCALE GENOMIC DNA]</scope>
    <source>
        <strain>Bristol N2</strain>
    </source>
</reference>
<keyword id="KW-0067">ATP-binding</keyword>
<keyword id="KW-0418">Kinase</keyword>
<keyword id="KW-0547">Nucleotide-binding</keyword>
<keyword id="KW-1185">Reference proteome</keyword>
<keyword id="KW-0723">Serine/threonine-protein kinase</keyword>
<keyword id="KW-0808">Transferase</keyword>
<evidence type="ECO:0000255" key="1">
    <source>
        <dbReference type="PROSITE-ProRule" id="PRU00159"/>
    </source>
</evidence>
<evidence type="ECO:0000255" key="2">
    <source>
        <dbReference type="PROSITE-ProRule" id="PRU10027"/>
    </source>
</evidence>
<evidence type="ECO:0000256" key="3">
    <source>
        <dbReference type="SAM" id="MobiDB-lite"/>
    </source>
</evidence>
<organism>
    <name type="scientific">Caenorhabditis elegans</name>
    <dbReference type="NCBI Taxonomy" id="6239"/>
    <lineage>
        <taxon>Eukaryota</taxon>
        <taxon>Metazoa</taxon>
        <taxon>Ecdysozoa</taxon>
        <taxon>Nematoda</taxon>
        <taxon>Chromadorea</taxon>
        <taxon>Rhabditida</taxon>
        <taxon>Rhabditina</taxon>
        <taxon>Rhabditomorpha</taxon>
        <taxon>Rhabditoidea</taxon>
        <taxon>Rhabditidae</taxon>
        <taxon>Peloderinae</taxon>
        <taxon>Caenorhabditis</taxon>
    </lineage>
</organism>
<feature type="chain" id="PRO_0000086833" description="Putative serine/threonine-protein kinase ZK507.3">
    <location>
        <begin position="1"/>
        <end position="374"/>
    </location>
</feature>
<feature type="domain" description="Protein kinase" evidence="1">
    <location>
        <begin position="25"/>
        <end position="296"/>
    </location>
</feature>
<feature type="region of interest" description="Disordered" evidence="3">
    <location>
        <begin position="302"/>
        <end position="374"/>
    </location>
</feature>
<feature type="compositionally biased region" description="Low complexity" evidence="3">
    <location>
        <begin position="306"/>
        <end position="324"/>
    </location>
</feature>
<feature type="compositionally biased region" description="Polar residues" evidence="3">
    <location>
        <begin position="334"/>
        <end position="343"/>
    </location>
</feature>
<feature type="compositionally biased region" description="Basic residues" evidence="3">
    <location>
        <begin position="364"/>
        <end position="374"/>
    </location>
</feature>
<feature type="active site" description="Proton acceptor" evidence="1 2">
    <location>
        <position position="158"/>
    </location>
</feature>
<feature type="binding site" evidence="1">
    <location>
        <begin position="31"/>
        <end position="39"/>
    </location>
    <ligand>
        <name>ATP</name>
        <dbReference type="ChEBI" id="CHEBI:30616"/>
    </ligand>
</feature>
<feature type="binding site" evidence="1">
    <location>
        <position position="60"/>
    </location>
    <ligand>
        <name>ATP</name>
        <dbReference type="ChEBI" id="CHEBI:30616"/>
    </ligand>
</feature>
<protein>
    <recommendedName>
        <fullName>Putative serine/threonine-protein kinase ZK507.3</fullName>
        <ecNumber>2.7.11.1</ecNumber>
    </recommendedName>
</protein>
<accession>P34635</accession>
<accession>P34634</accession>
<proteinExistence type="inferred from homology"/>